<comment type="catalytic activity">
    <reaction>
        <text>a quinone + sn-glycerol 3-phosphate = dihydroxyacetone phosphate + a quinol</text>
        <dbReference type="Rhea" id="RHEA:18977"/>
        <dbReference type="ChEBI" id="CHEBI:24646"/>
        <dbReference type="ChEBI" id="CHEBI:57597"/>
        <dbReference type="ChEBI" id="CHEBI:57642"/>
        <dbReference type="ChEBI" id="CHEBI:132124"/>
        <dbReference type="EC" id="1.1.5.3"/>
    </reaction>
</comment>
<comment type="cofactor">
    <cofactor evidence="1">
        <name>FAD</name>
        <dbReference type="ChEBI" id="CHEBI:57692"/>
    </cofactor>
</comment>
<comment type="activity regulation">
    <text evidence="1">Calcium-binding enhances the activity of the enzyme.</text>
</comment>
<comment type="pathway">
    <text>Polyol metabolism; glycerol degradation via glycerol kinase pathway; glycerone phosphate from sn-glycerol 3-phosphate (anaerobic route): step 1/1.</text>
</comment>
<comment type="subcellular location">
    <subcellularLocation>
        <location evidence="1">Mitochondrion</location>
    </subcellularLocation>
</comment>
<comment type="similarity">
    <text evidence="4">Belongs to the FAD-dependent glycerol-3-phosphate dehydrogenase family.</text>
</comment>
<proteinExistence type="inferred from homology"/>
<evidence type="ECO:0000250" key="1"/>
<evidence type="ECO:0000255" key="2"/>
<evidence type="ECO:0000255" key="3">
    <source>
        <dbReference type="PROSITE-ProRule" id="PRU00448"/>
    </source>
</evidence>
<evidence type="ECO:0000305" key="4"/>
<evidence type="ECO:0000312" key="5">
    <source>
        <dbReference type="WormBase" id="T25G3.4"/>
    </source>
</evidence>
<keyword id="KW-0106">Calcium</keyword>
<keyword id="KW-0274">FAD</keyword>
<keyword id="KW-0285">Flavoprotein</keyword>
<keyword id="KW-0479">Metal-binding</keyword>
<keyword id="KW-0496">Mitochondrion</keyword>
<keyword id="KW-0560">Oxidoreductase</keyword>
<keyword id="KW-1185">Reference proteome</keyword>
<keyword id="KW-0677">Repeat</keyword>
<keyword id="KW-0809">Transit peptide</keyword>
<accession>P90795</accession>
<accession>Q22793</accession>
<protein>
    <recommendedName>
        <fullName>Probable glycerol-3-phosphate dehydrogenase, mitochondrial</fullName>
        <shortName>GPD-M</shortName>
        <shortName>GPDH-M</shortName>
        <ecNumber>1.1.5.3</ecNumber>
    </recommendedName>
</protein>
<feature type="transit peptide" description="Mitochondrion">
    <location>
        <begin position="1"/>
        <end position="43"/>
    </location>
</feature>
<feature type="chain" id="PRO_0000010432" description="Probable glycerol-3-phosphate dehydrogenase, mitochondrial">
    <location>
        <begin position="44"/>
        <end position="722"/>
    </location>
</feature>
<feature type="domain" description="EF-hand 1" evidence="3">
    <location>
        <begin position="624"/>
        <end position="659"/>
    </location>
</feature>
<feature type="domain" description="EF-hand 2" evidence="3">
    <location>
        <begin position="660"/>
        <end position="695"/>
    </location>
</feature>
<feature type="binding site" evidence="2">
    <location>
        <begin position="76"/>
        <end position="104"/>
    </location>
    <ligand>
        <name>FAD</name>
        <dbReference type="ChEBI" id="CHEBI:57692"/>
    </ligand>
</feature>
<feature type="binding site" evidence="3">
    <location>
        <position position="673"/>
    </location>
    <ligand>
        <name>Ca(2+)</name>
        <dbReference type="ChEBI" id="CHEBI:29108"/>
    </ligand>
</feature>
<feature type="binding site" evidence="3">
    <location>
        <position position="675"/>
    </location>
    <ligand>
        <name>Ca(2+)</name>
        <dbReference type="ChEBI" id="CHEBI:29108"/>
    </ligand>
</feature>
<feature type="binding site" evidence="3">
    <location>
        <position position="677"/>
    </location>
    <ligand>
        <name>Ca(2+)</name>
        <dbReference type="ChEBI" id="CHEBI:29108"/>
    </ligand>
</feature>
<feature type="binding site" evidence="3">
    <location>
        <position position="679"/>
    </location>
    <ligand>
        <name>Ca(2+)</name>
        <dbReference type="ChEBI" id="CHEBI:29108"/>
    </ligand>
</feature>
<feature type="binding site" evidence="3">
    <location>
        <position position="684"/>
    </location>
    <ligand>
        <name>Ca(2+)</name>
        <dbReference type="ChEBI" id="CHEBI:29108"/>
    </ligand>
</feature>
<sequence>MSWVRFTKTGVAVVATSAAAVLALDMTNERRFQRQVKDHFRTVHADRLAELNKRAPSALPTRKDILTNLSKGEEFDVLIIGGGATGAGVALDAQTRGLKTALVELDDFSSGTSSRSTKLIHGGVRYLQAAIMKLDLEQYRMVKEALFERHNLLEIAPHLSSPLPIMLPIYKLWQVPYYWSGIKAYDFVSGKRVLKNSFFINKSQALERFPMLRNESLKGALIYYDGQHNDARMNLAIILTAIRHGAACANHVRVEKLNKDETGKVIGAHVRDMVTGGEWDIKAKAVINATGPFTDSIRLMGDPETARPICAPSSGVHITLPGYYSPSNTGLLDPDTSDGRVIFFLPWERMTIAGTTDAPSDVTLSPQPTDHDIEFILQEIRGYLSKDVSVRRGDVMSAWSGLRPLVRDPNKKDTKSLARNHIIEVGKSGLITIAGGKWTTYRHMAEETVDRVVEVHGLKTENGCVTPGLLLEGAHDWNSLQYIHLVQDYGMEVDVAQHLSNTYGDRAFVVARMCKMTGKRWPIVGQRLHPEFPYLDAEVRYAVREYACTAIDVIARRMRLAFLNTYAAHEVLPDVVRVMGQELGWSSAEQRAQLEKARTFIDMEMGQNAKQTAVSNVALNLTKEEMQRAKERFQQLDKDRKGHITVNDLRKHFREHNQKIDERVLHELLNEVDLNKNGEIEIAEFFQLYSGLKGGQLTGNRLVGYLDEIHGTPSVNRACGGI</sequence>
<name>GPDM_CAEEL</name>
<gene>
    <name evidence="5" type="primary">gpdh-3</name>
    <name evidence="5" type="ORF">T25G3.4</name>
</gene>
<organism>
    <name type="scientific">Caenorhabditis elegans</name>
    <dbReference type="NCBI Taxonomy" id="6239"/>
    <lineage>
        <taxon>Eukaryota</taxon>
        <taxon>Metazoa</taxon>
        <taxon>Ecdysozoa</taxon>
        <taxon>Nematoda</taxon>
        <taxon>Chromadorea</taxon>
        <taxon>Rhabditida</taxon>
        <taxon>Rhabditina</taxon>
        <taxon>Rhabditomorpha</taxon>
        <taxon>Rhabditoidea</taxon>
        <taxon>Rhabditidae</taxon>
        <taxon>Peloderinae</taxon>
        <taxon>Caenorhabditis</taxon>
    </lineage>
</organism>
<dbReference type="EC" id="1.1.5.3"/>
<dbReference type="EMBL" id="BX284601">
    <property type="protein sequence ID" value="CAA96690.1"/>
    <property type="molecule type" value="Genomic_DNA"/>
</dbReference>
<dbReference type="EMBL" id="Z73906">
    <property type="protein sequence ID" value="CAA96690.1"/>
    <property type="status" value="JOINED"/>
    <property type="molecule type" value="Genomic_DNA"/>
</dbReference>
<dbReference type="PIR" id="T20362">
    <property type="entry name" value="T20362"/>
</dbReference>
<dbReference type="RefSeq" id="NP_492115.1">
    <property type="nucleotide sequence ID" value="NM_059714.7"/>
</dbReference>
<dbReference type="SMR" id="P90795"/>
<dbReference type="BioGRID" id="37951">
    <property type="interactions" value="12"/>
</dbReference>
<dbReference type="FunCoup" id="P90795">
    <property type="interactions" value="2332"/>
</dbReference>
<dbReference type="STRING" id="6239.T25G3.4.1"/>
<dbReference type="PaxDb" id="6239-T25G3.4"/>
<dbReference type="PeptideAtlas" id="P90795"/>
<dbReference type="EnsemblMetazoa" id="T25G3.4.1">
    <property type="protein sequence ID" value="T25G3.4.1"/>
    <property type="gene ID" value="WBGene00012031"/>
</dbReference>
<dbReference type="GeneID" id="172509"/>
<dbReference type="KEGG" id="cel:CELE_T25G3.4"/>
<dbReference type="UCSC" id="T25G3.4">
    <property type="organism name" value="c. elegans"/>
</dbReference>
<dbReference type="AGR" id="WB:WBGene00012031"/>
<dbReference type="CTD" id="172509"/>
<dbReference type="WormBase" id="T25G3.4">
    <property type="protein sequence ID" value="CE14180"/>
    <property type="gene ID" value="WBGene00012031"/>
    <property type="gene designation" value="gpdh-3"/>
</dbReference>
<dbReference type="eggNOG" id="KOG0042">
    <property type="taxonomic scope" value="Eukaryota"/>
</dbReference>
<dbReference type="GeneTree" id="ENSGT00390000001718"/>
<dbReference type="HOGENOM" id="CLU_015740_3_1_1"/>
<dbReference type="InParanoid" id="P90795"/>
<dbReference type="OMA" id="PHIVKPM"/>
<dbReference type="OrthoDB" id="264015at2759"/>
<dbReference type="PhylomeDB" id="P90795"/>
<dbReference type="Reactome" id="R-CEL-1483166">
    <property type="pathway name" value="Synthesis of PA"/>
</dbReference>
<dbReference type="Reactome" id="R-CEL-163560">
    <property type="pathway name" value="Triglyceride catabolism"/>
</dbReference>
<dbReference type="UniPathway" id="UPA00618">
    <property type="reaction ID" value="UER00673"/>
</dbReference>
<dbReference type="PRO" id="PR:P90795"/>
<dbReference type="Proteomes" id="UP000001940">
    <property type="component" value="Chromosome I"/>
</dbReference>
<dbReference type="Bgee" id="WBGene00012031">
    <property type="expression patterns" value="Expressed in adult organism and 4 other cell types or tissues"/>
</dbReference>
<dbReference type="GO" id="GO:0005739">
    <property type="term" value="C:mitochondrion"/>
    <property type="evidence" value="ECO:0000318"/>
    <property type="project" value="GO_Central"/>
</dbReference>
<dbReference type="GO" id="GO:0005509">
    <property type="term" value="F:calcium ion binding"/>
    <property type="evidence" value="ECO:0007669"/>
    <property type="project" value="InterPro"/>
</dbReference>
<dbReference type="GO" id="GO:0004368">
    <property type="term" value="F:glycerol-3-phosphate dehydrogenase (quinone) activity"/>
    <property type="evidence" value="ECO:0000318"/>
    <property type="project" value="GO_Central"/>
</dbReference>
<dbReference type="GO" id="GO:0019563">
    <property type="term" value="P:glycerol catabolic process"/>
    <property type="evidence" value="ECO:0007669"/>
    <property type="project" value="UniProtKB-UniPathway"/>
</dbReference>
<dbReference type="GO" id="GO:0006072">
    <property type="term" value="P:glycerol-3-phosphate metabolic process"/>
    <property type="evidence" value="ECO:0000318"/>
    <property type="project" value="GO_Central"/>
</dbReference>
<dbReference type="GO" id="GO:0006127">
    <property type="term" value="P:glycerol-3-phosphate shuttle"/>
    <property type="evidence" value="ECO:0000318"/>
    <property type="project" value="GO_Central"/>
</dbReference>
<dbReference type="CDD" id="cd00051">
    <property type="entry name" value="EFh"/>
    <property type="match status" value="1"/>
</dbReference>
<dbReference type="FunFam" id="1.10.238.10:FF:000738">
    <property type="entry name" value="Glycerol-3-phosphate dehydrogenase"/>
    <property type="match status" value="1"/>
</dbReference>
<dbReference type="FunFam" id="1.10.8.870:FF:000001">
    <property type="entry name" value="Glycerol-3-phosphate dehydrogenase"/>
    <property type="match status" value="1"/>
</dbReference>
<dbReference type="Gene3D" id="1.10.8.870">
    <property type="entry name" value="Alpha-glycerophosphate oxidase, cap domain"/>
    <property type="match status" value="1"/>
</dbReference>
<dbReference type="Gene3D" id="3.30.9.10">
    <property type="entry name" value="D-Amino Acid Oxidase, subunit A, domain 2"/>
    <property type="match status" value="1"/>
</dbReference>
<dbReference type="Gene3D" id="1.10.238.10">
    <property type="entry name" value="EF-hand"/>
    <property type="match status" value="1"/>
</dbReference>
<dbReference type="Gene3D" id="3.50.50.60">
    <property type="entry name" value="FAD/NAD(P)-binding domain"/>
    <property type="match status" value="1"/>
</dbReference>
<dbReference type="InterPro" id="IPR031656">
    <property type="entry name" value="DAO_C"/>
</dbReference>
<dbReference type="InterPro" id="IPR038299">
    <property type="entry name" value="DAO_C_sf"/>
</dbReference>
<dbReference type="InterPro" id="IPR011992">
    <property type="entry name" value="EF-hand-dom_pair"/>
</dbReference>
<dbReference type="InterPro" id="IPR018247">
    <property type="entry name" value="EF_Hand_1_Ca_BS"/>
</dbReference>
<dbReference type="InterPro" id="IPR002048">
    <property type="entry name" value="EF_hand_dom"/>
</dbReference>
<dbReference type="InterPro" id="IPR006076">
    <property type="entry name" value="FAD-dep_OxRdtase"/>
</dbReference>
<dbReference type="InterPro" id="IPR036188">
    <property type="entry name" value="FAD/NAD-bd_sf"/>
</dbReference>
<dbReference type="InterPro" id="IPR000447">
    <property type="entry name" value="G3P_DH_FAD-dep"/>
</dbReference>
<dbReference type="PANTHER" id="PTHR11985">
    <property type="entry name" value="GLYCEROL-3-PHOSPHATE DEHYDROGENASE"/>
    <property type="match status" value="1"/>
</dbReference>
<dbReference type="PANTHER" id="PTHR11985:SF15">
    <property type="entry name" value="GLYCEROL-3-PHOSPHATE DEHYDROGENASE, MITOCHONDRIAL"/>
    <property type="match status" value="1"/>
</dbReference>
<dbReference type="Pfam" id="PF01266">
    <property type="entry name" value="DAO"/>
    <property type="match status" value="1"/>
</dbReference>
<dbReference type="Pfam" id="PF16901">
    <property type="entry name" value="DAO_C"/>
    <property type="match status" value="1"/>
</dbReference>
<dbReference type="Pfam" id="PF13499">
    <property type="entry name" value="EF-hand_7"/>
    <property type="match status" value="1"/>
</dbReference>
<dbReference type="PRINTS" id="PR01001">
    <property type="entry name" value="FADG3PDH"/>
</dbReference>
<dbReference type="SMART" id="SM00054">
    <property type="entry name" value="EFh"/>
    <property type="match status" value="2"/>
</dbReference>
<dbReference type="SUPFAM" id="SSF47473">
    <property type="entry name" value="EF-hand"/>
    <property type="match status" value="1"/>
</dbReference>
<dbReference type="SUPFAM" id="SSF54373">
    <property type="entry name" value="FAD-linked reductases, C-terminal domain"/>
    <property type="match status" value="1"/>
</dbReference>
<dbReference type="SUPFAM" id="SSF51905">
    <property type="entry name" value="FAD/NAD(P)-binding domain"/>
    <property type="match status" value="1"/>
</dbReference>
<dbReference type="PROSITE" id="PS00018">
    <property type="entry name" value="EF_HAND_1"/>
    <property type="match status" value="1"/>
</dbReference>
<dbReference type="PROSITE" id="PS50222">
    <property type="entry name" value="EF_HAND_2"/>
    <property type="match status" value="2"/>
</dbReference>
<dbReference type="PROSITE" id="PS00977">
    <property type="entry name" value="FAD_G3PDH_1"/>
    <property type="match status" value="1"/>
</dbReference>
<dbReference type="PROSITE" id="PS00978">
    <property type="entry name" value="FAD_G3PDH_2"/>
    <property type="match status" value="1"/>
</dbReference>
<reference key="1">
    <citation type="journal article" date="1998" name="Science">
        <title>Genome sequence of the nematode C. elegans: a platform for investigating biology.</title>
        <authorList>
            <consortium name="The C. elegans sequencing consortium"/>
        </authorList>
    </citation>
    <scope>NUCLEOTIDE SEQUENCE [LARGE SCALE GENOMIC DNA]</scope>
    <source>
        <strain>Bristol N2</strain>
    </source>
</reference>